<protein>
    <recommendedName>
        <fullName evidence="1">ATP synthase F(0) complex subunit 8</fullName>
    </recommendedName>
    <alternativeName>
        <fullName>A6L</fullName>
    </alternativeName>
    <alternativeName>
        <fullName>F-ATPase subunit 8</fullName>
    </alternativeName>
</protein>
<evidence type="ECO:0000250" key="1">
    <source>
        <dbReference type="UniProtKB" id="P03928"/>
    </source>
</evidence>
<evidence type="ECO:0000250" key="2">
    <source>
        <dbReference type="UniProtKB" id="P03930"/>
    </source>
</evidence>
<evidence type="ECO:0000250" key="3">
    <source>
        <dbReference type="UniProtKB" id="P19483"/>
    </source>
</evidence>
<evidence type="ECO:0000255" key="4"/>
<evidence type="ECO:0000305" key="5"/>
<comment type="function">
    <text evidence="1 3">Subunit 8, of the mitochondrial membrane ATP synthase complex (F(1)F(0) ATP synthase or Complex V) that produces ATP from ADP in the presence of a proton gradient across the membrane which is generated by electron transport complexes of the respiratory chain. ATP synthase complex consist of a soluble F(1) head domain - the catalytic core - and a membrane F(1) domain - the membrane proton channel. These two domains are linked by a central stalk rotating inside the F(1) region and a stationary peripheral stalk. During catalysis, ATP synthesis in the catalytic domain of F(1) is coupled via a rotary mechanism of the central stalk subunits to proton translocation (By similarity). In vivo, can only synthesize ATP although its ATP hydrolase activity can be activated artificially in vitro (By similarity). Part of the complex F(0) domain (By similarity).</text>
</comment>
<comment type="subunit">
    <text evidence="1">Component of the ATP synthase complex composed at least of ATP5F1A/subunit alpha, ATP5F1B/subunit beta, ATP5MC1/subunit c (homooctomer), MT-ATP6/subunit a, MT-ATP8/subunit 8, ATP5ME/subunit e, ATP5MF/subunit f, ATP5MG/subunit g, ATP5MK/subunit k, ATP5MJ/subunit j, ATP5F1C/subunit gamma, ATP5F1D/subunit delta, ATP5F1E/subunit epsilon, ATP5PF/subunit F6, ATP5PB/subunit b, ATP5PD/subunit d, ATP5PO/subunit OSCP. ATP synthase complex consists of a soluble F(1) head domain (subunits alpha(3) and beta(3)) - the catalytic core - and a membrane F(0) domain - the membrane proton channel (subunits c, a, 8, e, f, g, k and j). These two domains are linked by a central stalk (subunits gamma, delta, and epsilon) rotating inside the F1 region and a stationary peripheral stalk (subunits F6, b, d, and OSCP). Interacts with PRICKLE3.</text>
</comment>
<comment type="subcellular location">
    <subcellularLocation>
        <location>Mitochondrion membrane</location>
        <topology>Single-pass membrane protein</topology>
    </subcellularLocation>
</comment>
<comment type="similarity">
    <text evidence="5">Belongs to the ATPase protein 8 family.</text>
</comment>
<keyword id="KW-0007">Acetylation</keyword>
<keyword id="KW-0066">ATP synthesis</keyword>
<keyword id="KW-0138">CF(0)</keyword>
<keyword id="KW-0375">Hydrogen ion transport</keyword>
<keyword id="KW-0406">Ion transport</keyword>
<keyword id="KW-0472">Membrane</keyword>
<keyword id="KW-0496">Mitochondrion</keyword>
<keyword id="KW-1185">Reference proteome</keyword>
<keyword id="KW-0812">Transmembrane</keyword>
<keyword id="KW-1133">Transmembrane helix</keyword>
<keyword id="KW-0813">Transport</keyword>
<proteinExistence type="inferred from homology"/>
<feature type="chain" id="PRO_0000195560" description="ATP synthase F(0) complex subunit 8">
    <location>
        <begin position="1"/>
        <end position="68"/>
    </location>
</feature>
<feature type="transmembrane region" description="Helical" evidence="4">
    <location>
        <begin position="8"/>
        <end position="24"/>
    </location>
</feature>
<feature type="modified residue" description="N6-acetyllysine; alternate" evidence="2">
    <location>
        <position position="54"/>
    </location>
</feature>
<feature type="modified residue" description="N6-succinyllysine; alternate" evidence="2">
    <location>
        <position position="54"/>
    </location>
</feature>
<feature type="modified residue" description="N6-acetyllysine" evidence="2">
    <location>
        <position position="57"/>
    </location>
</feature>
<geneLocation type="mitochondrion"/>
<dbReference type="EMBL" id="D38116">
    <property type="protein sequence ID" value="BAA07313.1"/>
    <property type="molecule type" value="Genomic_DNA"/>
</dbReference>
<dbReference type="PIR" id="T14147">
    <property type="entry name" value="T14147"/>
</dbReference>
<dbReference type="RefSeq" id="NP_008203.1">
    <property type="nucleotide sequence ID" value="NC_001644.1"/>
</dbReference>
<dbReference type="SMR" id="Q35587"/>
<dbReference type="STRING" id="9597.ENSPPAP00000000005"/>
<dbReference type="Ensembl" id="ENSPPAT00000000021.1">
    <property type="protein sequence ID" value="ENSPPAP00000000005.1"/>
    <property type="gene ID" value="ENSPPAG00000000021.1"/>
</dbReference>
<dbReference type="GeneID" id="807876"/>
<dbReference type="KEGG" id="pps:807876"/>
<dbReference type="CTD" id="4509"/>
<dbReference type="GeneTree" id="ENSGT00390000008771"/>
<dbReference type="OMA" id="LDTSTWF"/>
<dbReference type="Proteomes" id="UP000240080">
    <property type="component" value="Mitochondrion"/>
</dbReference>
<dbReference type="Bgee" id="ENSPPAG00000000021">
    <property type="expression patterns" value="Expressed in heart and 6 other cell types or tissues"/>
</dbReference>
<dbReference type="GO" id="GO:0031966">
    <property type="term" value="C:mitochondrial membrane"/>
    <property type="evidence" value="ECO:0007669"/>
    <property type="project" value="UniProtKB-SubCell"/>
</dbReference>
<dbReference type="GO" id="GO:0045259">
    <property type="term" value="C:proton-transporting ATP synthase complex"/>
    <property type="evidence" value="ECO:0000250"/>
    <property type="project" value="UniProtKB"/>
</dbReference>
<dbReference type="GO" id="GO:0046933">
    <property type="term" value="F:proton-transporting ATP synthase activity, rotational mechanism"/>
    <property type="evidence" value="ECO:0007669"/>
    <property type="project" value="Ensembl"/>
</dbReference>
<dbReference type="GO" id="GO:0042776">
    <property type="term" value="P:proton motive force-driven mitochondrial ATP synthesis"/>
    <property type="evidence" value="ECO:0007669"/>
    <property type="project" value="Ensembl"/>
</dbReference>
<dbReference type="InterPro" id="IPR039017">
    <property type="entry name" value="ATP8_mammal"/>
</dbReference>
<dbReference type="InterPro" id="IPR001421">
    <property type="entry name" value="ATP8_metazoa"/>
</dbReference>
<dbReference type="PANTHER" id="PTHR13722">
    <property type="entry name" value="ATP SYNTHASE PROTEIN 8"/>
    <property type="match status" value="1"/>
</dbReference>
<dbReference type="PANTHER" id="PTHR13722:SF0">
    <property type="entry name" value="ATP SYNTHASE PROTEIN 8"/>
    <property type="match status" value="1"/>
</dbReference>
<dbReference type="Pfam" id="PF00895">
    <property type="entry name" value="ATP-synt_8"/>
    <property type="match status" value="1"/>
</dbReference>
<accession>Q35587</accession>
<organism>
    <name type="scientific">Pan paniscus</name>
    <name type="common">Pygmy chimpanzee</name>
    <name type="synonym">Bonobo</name>
    <dbReference type="NCBI Taxonomy" id="9597"/>
    <lineage>
        <taxon>Eukaryota</taxon>
        <taxon>Metazoa</taxon>
        <taxon>Chordata</taxon>
        <taxon>Craniata</taxon>
        <taxon>Vertebrata</taxon>
        <taxon>Euteleostomi</taxon>
        <taxon>Mammalia</taxon>
        <taxon>Eutheria</taxon>
        <taxon>Euarchontoglires</taxon>
        <taxon>Primates</taxon>
        <taxon>Haplorrhini</taxon>
        <taxon>Catarrhini</taxon>
        <taxon>Hominidae</taxon>
        <taxon>Pan</taxon>
    </lineage>
</organism>
<reference key="1">
    <citation type="journal article" date="1995" name="Proc. Natl. Acad. Sci. U.S.A.">
        <title>Recent African origin of modern humans revealed by complete sequences of hominoid mitochondrial DNAs.</title>
        <authorList>
            <person name="Horai S."/>
            <person name="Hayasaka K."/>
            <person name="Kondo R."/>
            <person name="Tsugane K."/>
            <person name="Takahata N."/>
        </authorList>
    </citation>
    <scope>NUCLEOTIDE SEQUENCE [GENOMIC DNA]</scope>
</reference>
<sequence length="68" mass="7918">MPQLNTAVWPTTITPMLLTLFLITQLKMLNSNYHLPPSPKPMKMKNYNKPWEPKWTKICSLHSLPPQS</sequence>
<gene>
    <name evidence="1" type="primary">MT-ATP8</name>
    <name type="synonym">ATP8</name>
    <name type="synonym">ATPASE8</name>
    <name type="synonym">MTATP8</name>
</gene>
<name>ATP8_PANPA</name>